<feature type="chain" id="PRO_1000006023" description="DNA-directed RNA polymerase subunit omega">
    <location>
        <begin position="1"/>
        <end position="72"/>
    </location>
</feature>
<organism>
    <name type="scientific">Staphylococcus aureus (strain NCTC 8325 / PS 47)</name>
    <dbReference type="NCBI Taxonomy" id="93061"/>
    <lineage>
        <taxon>Bacteria</taxon>
        <taxon>Bacillati</taxon>
        <taxon>Bacillota</taxon>
        <taxon>Bacilli</taxon>
        <taxon>Bacillales</taxon>
        <taxon>Staphylococcaceae</taxon>
        <taxon>Staphylococcus</taxon>
    </lineage>
</organism>
<sequence>MLNPPLNQLTSQIKSKYLIATTAAKRAREIDEQPETELLSEYHSFKPVGRALEEIADGKIRPVISSDYYGKE</sequence>
<reference key="1">
    <citation type="book" date="2006" name="Gram positive pathogens, 2nd edition">
        <title>The Staphylococcus aureus NCTC 8325 genome.</title>
        <editorList>
            <person name="Fischetti V."/>
            <person name="Novick R."/>
            <person name="Ferretti J."/>
            <person name="Portnoy D."/>
            <person name="Rood J."/>
        </editorList>
        <authorList>
            <person name="Gillaspy A.F."/>
            <person name="Worrell V."/>
            <person name="Orvis J."/>
            <person name="Roe B.A."/>
            <person name="Dyer D.W."/>
            <person name="Iandolo J.J."/>
        </authorList>
    </citation>
    <scope>NUCLEOTIDE SEQUENCE [LARGE SCALE GENOMIC DNA]</scope>
    <source>
        <strain>NCTC 8325 / PS 47</strain>
    </source>
</reference>
<comment type="function">
    <text evidence="1">Promotes RNA polymerase assembly. Latches the N- and C-terminal regions of the beta' subunit thereby facilitating its interaction with the beta and alpha subunits.</text>
</comment>
<comment type="catalytic activity">
    <reaction evidence="1">
        <text>RNA(n) + a ribonucleoside 5'-triphosphate = RNA(n+1) + diphosphate</text>
        <dbReference type="Rhea" id="RHEA:21248"/>
        <dbReference type="Rhea" id="RHEA-COMP:14527"/>
        <dbReference type="Rhea" id="RHEA-COMP:17342"/>
        <dbReference type="ChEBI" id="CHEBI:33019"/>
        <dbReference type="ChEBI" id="CHEBI:61557"/>
        <dbReference type="ChEBI" id="CHEBI:140395"/>
        <dbReference type="EC" id="2.7.7.6"/>
    </reaction>
</comment>
<comment type="subunit">
    <text evidence="1">The RNAP catalytic core consists of 2 alpha, 1 beta, 1 beta' and 1 omega subunit. When a sigma factor is associated with the core the holoenzyme is formed, which can initiate transcription.</text>
</comment>
<comment type="similarity">
    <text evidence="1">Belongs to the RNA polymerase subunit omega family.</text>
</comment>
<accession>Q2G1T9</accession>
<keyword id="KW-0002">3D-structure</keyword>
<keyword id="KW-0240">DNA-directed RNA polymerase</keyword>
<keyword id="KW-0548">Nucleotidyltransferase</keyword>
<keyword id="KW-1185">Reference proteome</keyword>
<keyword id="KW-0804">Transcription</keyword>
<keyword id="KW-0808">Transferase</keyword>
<gene>
    <name evidence="1" type="primary">rpoZ</name>
    <name type="ordered locus">SAOUHSC_01177</name>
</gene>
<dbReference type="EC" id="2.7.7.6" evidence="1"/>
<dbReference type="EMBL" id="CP000253">
    <property type="protein sequence ID" value="ABD30284.1"/>
    <property type="molecule type" value="Genomic_DNA"/>
</dbReference>
<dbReference type="RefSeq" id="WP_000933956.1">
    <property type="nucleotide sequence ID" value="NZ_LS483365.1"/>
</dbReference>
<dbReference type="RefSeq" id="YP_499716.1">
    <property type="nucleotide sequence ID" value="NC_007795.1"/>
</dbReference>
<dbReference type="PDB" id="8X6F">
    <property type="method" value="EM"/>
    <property type="resolution" value="3.70 A"/>
    <property type="chains" value="F=1-72"/>
</dbReference>
<dbReference type="PDB" id="8X6G">
    <property type="method" value="EM"/>
    <property type="resolution" value="3.30 A"/>
    <property type="chains" value="F=1-72"/>
</dbReference>
<dbReference type="PDBsum" id="8X6F"/>
<dbReference type="PDBsum" id="8X6G"/>
<dbReference type="SMR" id="Q2G1T9"/>
<dbReference type="STRING" id="93061.SAOUHSC_01177"/>
<dbReference type="PaxDb" id="1280-SAXN108_1209"/>
<dbReference type="GeneID" id="3920928"/>
<dbReference type="KEGG" id="sao:SAOUHSC_01177"/>
<dbReference type="PATRIC" id="fig|93061.5.peg.1080"/>
<dbReference type="eggNOG" id="COG1758">
    <property type="taxonomic scope" value="Bacteria"/>
</dbReference>
<dbReference type="HOGENOM" id="CLU_125406_6_0_9"/>
<dbReference type="OrthoDB" id="9815459at2"/>
<dbReference type="PRO" id="PR:Q2G1T9"/>
<dbReference type="Proteomes" id="UP000008816">
    <property type="component" value="Chromosome"/>
</dbReference>
<dbReference type="GO" id="GO:0000345">
    <property type="term" value="C:cytosolic DNA-directed RNA polymerase complex"/>
    <property type="evidence" value="ECO:0000318"/>
    <property type="project" value="GO_Central"/>
</dbReference>
<dbReference type="GO" id="GO:0001000">
    <property type="term" value="F:bacterial-type RNA polymerase core enzyme binding"/>
    <property type="evidence" value="ECO:0000318"/>
    <property type="project" value="GO_Central"/>
</dbReference>
<dbReference type="GO" id="GO:0003677">
    <property type="term" value="F:DNA binding"/>
    <property type="evidence" value="ECO:0007669"/>
    <property type="project" value="UniProtKB-UniRule"/>
</dbReference>
<dbReference type="GO" id="GO:0003899">
    <property type="term" value="F:DNA-directed RNA polymerase activity"/>
    <property type="evidence" value="ECO:0007669"/>
    <property type="project" value="UniProtKB-UniRule"/>
</dbReference>
<dbReference type="GO" id="GO:0006352">
    <property type="term" value="P:DNA-templated transcription initiation"/>
    <property type="evidence" value="ECO:0000318"/>
    <property type="project" value="GO_Central"/>
</dbReference>
<dbReference type="Gene3D" id="3.90.940.10">
    <property type="match status" value="1"/>
</dbReference>
<dbReference type="HAMAP" id="MF_00366">
    <property type="entry name" value="RNApol_bact_RpoZ"/>
    <property type="match status" value="1"/>
</dbReference>
<dbReference type="InterPro" id="IPR003716">
    <property type="entry name" value="DNA-dir_RNA_pol_omega"/>
</dbReference>
<dbReference type="InterPro" id="IPR006110">
    <property type="entry name" value="Pol_omega/Rpo6/RPB6"/>
</dbReference>
<dbReference type="InterPro" id="IPR036161">
    <property type="entry name" value="RPB6/omega-like_sf"/>
</dbReference>
<dbReference type="NCBIfam" id="TIGR00690">
    <property type="entry name" value="rpoZ"/>
    <property type="match status" value="1"/>
</dbReference>
<dbReference type="PANTHER" id="PTHR34476">
    <property type="entry name" value="DNA-DIRECTED RNA POLYMERASE SUBUNIT OMEGA"/>
    <property type="match status" value="1"/>
</dbReference>
<dbReference type="PANTHER" id="PTHR34476:SF1">
    <property type="entry name" value="DNA-DIRECTED RNA POLYMERASE SUBUNIT OMEGA"/>
    <property type="match status" value="1"/>
</dbReference>
<dbReference type="Pfam" id="PF01192">
    <property type="entry name" value="RNA_pol_Rpb6"/>
    <property type="match status" value="1"/>
</dbReference>
<dbReference type="SMART" id="SM01409">
    <property type="entry name" value="RNA_pol_Rpb6"/>
    <property type="match status" value="1"/>
</dbReference>
<dbReference type="SUPFAM" id="SSF63562">
    <property type="entry name" value="RPB6/omega subunit-like"/>
    <property type="match status" value="1"/>
</dbReference>
<name>RPOZ_STAA8</name>
<proteinExistence type="evidence at protein level"/>
<protein>
    <recommendedName>
        <fullName evidence="1">DNA-directed RNA polymerase subunit omega</fullName>
        <shortName evidence="1">RNAP omega subunit</shortName>
        <ecNumber evidence="1">2.7.7.6</ecNumber>
    </recommendedName>
    <alternativeName>
        <fullName evidence="1">RNA polymerase omega subunit</fullName>
    </alternativeName>
    <alternativeName>
        <fullName evidence="1">Transcriptase subunit omega</fullName>
    </alternativeName>
</protein>
<evidence type="ECO:0000255" key="1">
    <source>
        <dbReference type="HAMAP-Rule" id="MF_00366"/>
    </source>
</evidence>